<dbReference type="EMBL" id="CP001205">
    <property type="protein sequence ID" value="ACK74609.1"/>
    <property type="molecule type" value="Genomic_DNA"/>
</dbReference>
<dbReference type="RefSeq" id="WP_002657853.1">
    <property type="nucleotide sequence ID" value="NC_011728.1"/>
</dbReference>
<dbReference type="SMR" id="B7J1W5"/>
<dbReference type="GeneID" id="56567821"/>
<dbReference type="KEGG" id="bbz:BbuZS7_0395"/>
<dbReference type="HOGENOM" id="CLU_074237_2_1_12"/>
<dbReference type="Proteomes" id="UP000006901">
    <property type="component" value="Chromosome"/>
</dbReference>
<dbReference type="GO" id="GO:0022625">
    <property type="term" value="C:cytosolic large ribosomal subunit"/>
    <property type="evidence" value="ECO:0007669"/>
    <property type="project" value="TreeGrafter"/>
</dbReference>
<dbReference type="GO" id="GO:0070180">
    <property type="term" value="F:large ribosomal subunit rRNA binding"/>
    <property type="evidence" value="ECO:0007669"/>
    <property type="project" value="UniProtKB-UniRule"/>
</dbReference>
<dbReference type="GO" id="GO:0003735">
    <property type="term" value="F:structural constituent of ribosome"/>
    <property type="evidence" value="ECO:0007669"/>
    <property type="project" value="InterPro"/>
</dbReference>
<dbReference type="GO" id="GO:0006412">
    <property type="term" value="P:translation"/>
    <property type="evidence" value="ECO:0007669"/>
    <property type="project" value="UniProtKB-UniRule"/>
</dbReference>
<dbReference type="CDD" id="cd00349">
    <property type="entry name" value="Ribosomal_L11"/>
    <property type="match status" value="1"/>
</dbReference>
<dbReference type="FunFam" id="1.10.10.250:FF:000001">
    <property type="entry name" value="50S ribosomal protein L11"/>
    <property type="match status" value="1"/>
</dbReference>
<dbReference type="FunFam" id="3.30.1550.10:FF:000006">
    <property type="entry name" value="50S ribosomal protein L11"/>
    <property type="match status" value="1"/>
</dbReference>
<dbReference type="Gene3D" id="1.10.10.250">
    <property type="entry name" value="Ribosomal protein L11, C-terminal domain"/>
    <property type="match status" value="1"/>
</dbReference>
<dbReference type="Gene3D" id="3.30.1550.10">
    <property type="entry name" value="Ribosomal protein L11/L12, N-terminal domain"/>
    <property type="match status" value="1"/>
</dbReference>
<dbReference type="HAMAP" id="MF_00736">
    <property type="entry name" value="Ribosomal_uL11"/>
    <property type="match status" value="1"/>
</dbReference>
<dbReference type="InterPro" id="IPR000911">
    <property type="entry name" value="Ribosomal_uL11"/>
</dbReference>
<dbReference type="InterPro" id="IPR006519">
    <property type="entry name" value="Ribosomal_uL11_bac-typ"/>
</dbReference>
<dbReference type="InterPro" id="IPR020783">
    <property type="entry name" value="Ribosomal_uL11_C"/>
</dbReference>
<dbReference type="InterPro" id="IPR036769">
    <property type="entry name" value="Ribosomal_uL11_C_sf"/>
</dbReference>
<dbReference type="InterPro" id="IPR020785">
    <property type="entry name" value="Ribosomal_uL11_CS"/>
</dbReference>
<dbReference type="InterPro" id="IPR020784">
    <property type="entry name" value="Ribosomal_uL11_N"/>
</dbReference>
<dbReference type="InterPro" id="IPR036796">
    <property type="entry name" value="Ribosomal_uL11_N_sf"/>
</dbReference>
<dbReference type="NCBIfam" id="TIGR01632">
    <property type="entry name" value="L11_bact"/>
    <property type="match status" value="1"/>
</dbReference>
<dbReference type="PANTHER" id="PTHR11661">
    <property type="entry name" value="60S RIBOSOMAL PROTEIN L12"/>
    <property type="match status" value="1"/>
</dbReference>
<dbReference type="PANTHER" id="PTHR11661:SF1">
    <property type="entry name" value="LARGE RIBOSOMAL SUBUNIT PROTEIN UL11M"/>
    <property type="match status" value="1"/>
</dbReference>
<dbReference type="Pfam" id="PF00298">
    <property type="entry name" value="Ribosomal_L11"/>
    <property type="match status" value="1"/>
</dbReference>
<dbReference type="Pfam" id="PF03946">
    <property type="entry name" value="Ribosomal_L11_N"/>
    <property type="match status" value="1"/>
</dbReference>
<dbReference type="SMART" id="SM00649">
    <property type="entry name" value="RL11"/>
    <property type="match status" value="1"/>
</dbReference>
<dbReference type="SUPFAM" id="SSF54747">
    <property type="entry name" value="Ribosomal L11/L12e N-terminal domain"/>
    <property type="match status" value="1"/>
</dbReference>
<dbReference type="SUPFAM" id="SSF46906">
    <property type="entry name" value="Ribosomal protein L11, C-terminal domain"/>
    <property type="match status" value="1"/>
</dbReference>
<dbReference type="PROSITE" id="PS00359">
    <property type="entry name" value="RIBOSOMAL_L11"/>
    <property type="match status" value="1"/>
</dbReference>
<accession>B7J1W5</accession>
<organism>
    <name type="scientific">Borreliella burgdorferi (strain ZS7)</name>
    <name type="common">Borrelia burgdorferi</name>
    <dbReference type="NCBI Taxonomy" id="445985"/>
    <lineage>
        <taxon>Bacteria</taxon>
        <taxon>Pseudomonadati</taxon>
        <taxon>Spirochaetota</taxon>
        <taxon>Spirochaetia</taxon>
        <taxon>Spirochaetales</taxon>
        <taxon>Borreliaceae</taxon>
        <taxon>Borreliella</taxon>
    </lineage>
</organism>
<protein>
    <recommendedName>
        <fullName evidence="1">Large ribosomal subunit protein uL11</fullName>
    </recommendedName>
    <alternativeName>
        <fullName evidence="2">50S ribosomal protein L11</fullName>
    </alternativeName>
</protein>
<reference key="1">
    <citation type="journal article" date="2011" name="J. Bacteriol.">
        <title>Whole-genome sequences of thirteen isolates of Borrelia burgdorferi.</title>
        <authorList>
            <person name="Schutzer S.E."/>
            <person name="Fraser-Liggett C.M."/>
            <person name="Casjens S.R."/>
            <person name="Qiu W.G."/>
            <person name="Dunn J.J."/>
            <person name="Mongodin E.F."/>
            <person name="Luft B.J."/>
        </authorList>
    </citation>
    <scope>NUCLEOTIDE SEQUENCE [LARGE SCALE GENOMIC DNA]</scope>
    <source>
        <strain>ZS7</strain>
    </source>
</reference>
<gene>
    <name evidence="1" type="primary">rplK</name>
    <name type="ordered locus">BbuZS7_0395</name>
</gene>
<comment type="function">
    <text evidence="1">Forms part of the ribosomal stalk which helps the ribosome interact with GTP-bound translation factors.</text>
</comment>
<comment type="subunit">
    <text evidence="1">Part of the ribosomal stalk of the 50S ribosomal subunit. Interacts with L10 and the large rRNA to form the base of the stalk. L10 forms an elongated spine to which L12 dimers bind in a sequential fashion forming a multimeric L10(L12)X complex.</text>
</comment>
<comment type="PTM">
    <text evidence="1">One or more lysine residues are methylated.</text>
</comment>
<comment type="similarity">
    <text evidence="1">Belongs to the universal ribosomal protein uL11 family.</text>
</comment>
<evidence type="ECO:0000255" key="1">
    <source>
        <dbReference type="HAMAP-Rule" id="MF_00736"/>
    </source>
</evidence>
<evidence type="ECO:0000305" key="2"/>
<proteinExistence type="inferred from homology"/>
<name>RL11_BORBZ</name>
<sequence>MAKKKAISWIKLQVPAAQAAPGAKIGQALGPHGVSGPQFVKEFNERTAKMDPGIVVPVIITVYSDKSFSFIVKTPPASILIKKAIGIESGSKKSNTDKVGTISKEKLMEIARIKMSDLNAKSESAAFKIIAGSARSMGVEVEK</sequence>
<keyword id="KW-0488">Methylation</keyword>
<keyword id="KW-0687">Ribonucleoprotein</keyword>
<keyword id="KW-0689">Ribosomal protein</keyword>
<keyword id="KW-0694">RNA-binding</keyword>
<keyword id="KW-0699">rRNA-binding</keyword>
<feature type="chain" id="PRO_1000132868" description="Large ribosomal subunit protein uL11">
    <location>
        <begin position="1"/>
        <end position="143"/>
    </location>
</feature>